<sequence>MNLEILAQLTALAFIVVSGPLVIALLAFRKGNL</sequence>
<protein>
    <recommendedName>
        <fullName evidence="1">Photosystem II reaction center protein Psb30</fullName>
    </recommendedName>
    <alternativeName>
        <fullName evidence="1">Photosystem II reaction center protein Ycf12</fullName>
    </alternativeName>
</protein>
<name>PSB30_CHAGL</name>
<organism>
    <name type="scientific">Chaetosphaeridium globosum</name>
    <name type="common">Charophycean green alga</name>
    <name type="synonym">Herposteiron globosum</name>
    <dbReference type="NCBI Taxonomy" id="96477"/>
    <lineage>
        <taxon>Eukaryota</taxon>
        <taxon>Viridiplantae</taxon>
        <taxon>Streptophyta</taxon>
        <taxon>Coleochaetophyceae</taxon>
        <taxon>Coleochaetales</taxon>
        <taxon>Chaetosphaeridiaceae</taxon>
        <taxon>Chaetosphaeridium</taxon>
    </lineage>
</organism>
<evidence type="ECO:0000255" key="1">
    <source>
        <dbReference type="HAMAP-Rule" id="MF_01329"/>
    </source>
</evidence>
<proteinExistence type="inferred from homology"/>
<accession>Q8M9Z7</accession>
<gene>
    <name evidence="1" type="primary">psb30</name>
    <name evidence="1" type="synonym">ycf12</name>
</gene>
<dbReference type="EMBL" id="AF494278">
    <property type="protein sequence ID" value="AAM96582.1"/>
    <property type="molecule type" value="Genomic_DNA"/>
</dbReference>
<dbReference type="RefSeq" id="NP_683789.1">
    <property type="nucleotide sequence ID" value="NC_004115.1"/>
</dbReference>
<dbReference type="SMR" id="Q8M9Z7"/>
<dbReference type="GeneID" id="860738"/>
<dbReference type="GO" id="GO:0009535">
    <property type="term" value="C:chloroplast thylakoid membrane"/>
    <property type="evidence" value="ECO:0007669"/>
    <property type="project" value="UniProtKB-SubCell"/>
</dbReference>
<dbReference type="GO" id="GO:0009523">
    <property type="term" value="C:photosystem II"/>
    <property type="evidence" value="ECO:0007669"/>
    <property type="project" value="UniProtKB-KW"/>
</dbReference>
<dbReference type="GO" id="GO:0015979">
    <property type="term" value="P:photosynthesis"/>
    <property type="evidence" value="ECO:0007669"/>
    <property type="project" value="UniProtKB-KW"/>
</dbReference>
<dbReference type="HAMAP" id="MF_01329">
    <property type="entry name" value="PSII_Psb30_Ycf12"/>
    <property type="match status" value="1"/>
</dbReference>
<dbReference type="InterPro" id="IPR010284">
    <property type="entry name" value="PSII_Ycf12_core-subunit"/>
</dbReference>
<dbReference type="NCBIfam" id="NF010239">
    <property type="entry name" value="PRK13686.1"/>
    <property type="match status" value="1"/>
</dbReference>
<dbReference type="Pfam" id="PF05969">
    <property type="entry name" value="PSII_Ycf12"/>
    <property type="match status" value="1"/>
</dbReference>
<geneLocation type="chloroplast"/>
<keyword id="KW-0150">Chloroplast</keyword>
<keyword id="KW-0472">Membrane</keyword>
<keyword id="KW-0602">Photosynthesis</keyword>
<keyword id="KW-0604">Photosystem II</keyword>
<keyword id="KW-0934">Plastid</keyword>
<keyword id="KW-0793">Thylakoid</keyword>
<keyword id="KW-0812">Transmembrane</keyword>
<keyword id="KW-1133">Transmembrane helix</keyword>
<comment type="function">
    <text evidence="1">A core subunit of photosystem II (PSII), probably helps stabilize the reaction center.</text>
</comment>
<comment type="subunit">
    <text evidence="1">PSII is composed of 1 copy each of membrane proteins PsbA, PsbB, PsbC, PsbD, PsbE, PsbF, PsbH, PsbI, PsbJ, PsbK, PsbL, PsbM, PsbT, PsbX, PsbY, PsbZ, Psb30/Ycf12, peripheral proteins of the oxygen-evolving complex and a large number of cofactors. It forms dimeric complexes.</text>
</comment>
<comment type="subcellular location">
    <subcellularLocation>
        <location evidence="1">Plastid</location>
        <location evidence="1">Chloroplast thylakoid membrane</location>
        <topology evidence="1">Single-pass membrane protein</topology>
    </subcellularLocation>
</comment>
<comment type="similarity">
    <text evidence="1">Belongs to the Psb30/Ycf12 family.</text>
</comment>
<feature type="chain" id="PRO_0000059013" description="Photosystem II reaction center protein Psb30">
    <location>
        <begin position="1"/>
        <end position="33"/>
    </location>
</feature>
<feature type="transmembrane region" description="Helical" evidence="1">
    <location>
        <begin position="5"/>
        <end position="25"/>
    </location>
</feature>
<reference key="1">
    <citation type="journal article" date="2002" name="Proc. Natl. Acad. Sci. U.S.A.">
        <title>The chloroplast and mitochondrial genome sequences of the charophyte Chaetosphaeridium globosum: insights into the timing of the events that restructured organelle DNAs within the green algal lineage that led to land plants.</title>
        <authorList>
            <person name="Turmel M."/>
            <person name="Otis C."/>
            <person name="Lemieux C."/>
        </authorList>
    </citation>
    <scope>NUCLEOTIDE SEQUENCE [LARGE SCALE GENOMIC DNA]</scope>
    <source>
        <strain>M1311</strain>
    </source>
</reference>